<sequence length="82" mass="9235">MVTIRLARHGAKKRPFYQVVVTDSRNARNGRFIERVGFFNPIASEKEEGTRLDLDRIAHWVGQGATISDRVAALIKEVKKAA</sequence>
<dbReference type="EMBL" id="AM933173">
    <property type="protein sequence ID" value="CAR38471.1"/>
    <property type="molecule type" value="Genomic_DNA"/>
</dbReference>
<dbReference type="RefSeq" id="WP_000256453.1">
    <property type="nucleotide sequence ID" value="NC_011274.1"/>
</dbReference>
<dbReference type="SMR" id="B5RD85"/>
<dbReference type="KEGG" id="seg:SG2654"/>
<dbReference type="HOGENOM" id="CLU_100590_5_1_6"/>
<dbReference type="Proteomes" id="UP000008321">
    <property type="component" value="Chromosome"/>
</dbReference>
<dbReference type="GO" id="GO:0005737">
    <property type="term" value="C:cytoplasm"/>
    <property type="evidence" value="ECO:0007669"/>
    <property type="project" value="UniProtKB-ARBA"/>
</dbReference>
<dbReference type="GO" id="GO:0015935">
    <property type="term" value="C:small ribosomal subunit"/>
    <property type="evidence" value="ECO:0007669"/>
    <property type="project" value="TreeGrafter"/>
</dbReference>
<dbReference type="GO" id="GO:0003735">
    <property type="term" value="F:structural constituent of ribosome"/>
    <property type="evidence" value="ECO:0007669"/>
    <property type="project" value="InterPro"/>
</dbReference>
<dbReference type="GO" id="GO:0006412">
    <property type="term" value="P:translation"/>
    <property type="evidence" value="ECO:0007669"/>
    <property type="project" value="UniProtKB-UniRule"/>
</dbReference>
<dbReference type="FunFam" id="3.30.1320.10:FF:000001">
    <property type="entry name" value="30S ribosomal protein S16"/>
    <property type="match status" value="1"/>
</dbReference>
<dbReference type="Gene3D" id="3.30.1320.10">
    <property type="match status" value="1"/>
</dbReference>
<dbReference type="HAMAP" id="MF_00385">
    <property type="entry name" value="Ribosomal_bS16"/>
    <property type="match status" value="1"/>
</dbReference>
<dbReference type="InterPro" id="IPR000307">
    <property type="entry name" value="Ribosomal_bS16"/>
</dbReference>
<dbReference type="InterPro" id="IPR020592">
    <property type="entry name" value="Ribosomal_bS16_CS"/>
</dbReference>
<dbReference type="InterPro" id="IPR023803">
    <property type="entry name" value="Ribosomal_bS16_dom_sf"/>
</dbReference>
<dbReference type="NCBIfam" id="TIGR00002">
    <property type="entry name" value="S16"/>
    <property type="match status" value="1"/>
</dbReference>
<dbReference type="PANTHER" id="PTHR12919">
    <property type="entry name" value="30S RIBOSOMAL PROTEIN S16"/>
    <property type="match status" value="1"/>
</dbReference>
<dbReference type="PANTHER" id="PTHR12919:SF20">
    <property type="entry name" value="SMALL RIBOSOMAL SUBUNIT PROTEIN BS16M"/>
    <property type="match status" value="1"/>
</dbReference>
<dbReference type="Pfam" id="PF00886">
    <property type="entry name" value="Ribosomal_S16"/>
    <property type="match status" value="1"/>
</dbReference>
<dbReference type="SUPFAM" id="SSF54565">
    <property type="entry name" value="Ribosomal protein S16"/>
    <property type="match status" value="1"/>
</dbReference>
<dbReference type="PROSITE" id="PS00732">
    <property type="entry name" value="RIBOSOMAL_S16"/>
    <property type="match status" value="1"/>
</dbReference>
<evidence type="ECO:0000255" key="1">
    <source>
        <dbReference type="HAMAP-Rule" id="MF_00385"/>
    </source>
</evidence>
<evidence type="ECO:0000305" key="2"/>
<gene>
    <name evidence="1" type="primary">rpsP</name>
    <name type="ordered locus">SG2654</name>
</gene>
<feature type="chain" id="PRO_1000196468" description="Small ribosomal subunit protein bS16">
    <location>
        <begin position="1"/>
        <end position="82"/>
    </location>
</feature>
<keyword id="KW-0687">Ribonucleoprotein</keyword>
<keyword id="KW-0689">Ribosomal protein</keyword>
<accession>B5RD85</accession>
<reference key="1">
    <citation type="journal article" date="2008" name="Genome Res.">
        <title>Comparative genome analysis of Salmonella enteritidis PT4 and Salmonella gallinarum 287/91 provides insights into evolutionary and host adaptation pathways.</title>
        <authorList>
            <person name="Thomson N.R."/>
            <person name="Clayton D.J."/>
            <person name="Windhorst D."/>
            <person name="Vernikos G."/>
            <person name="Davidson S."/>
            <person name="Churcher C."/>
            <person name="Quail M.A."/>
            <person name="Stevens M."/>
            <person name="Jones M.A."/>
            <person name="Watson M."/>
            <person name="Barron A."/>
            <person name="Layton A."/>
            <person name="Pickard D."/>
            <person name="Kingsley R.A."/>
            <person name="Bignell A."/>
            <person name="Clark L."/>
            <person name="Harris B."/>
            <person name="Ormond D."/>
            <person name="Abdellah Z."/>
            <person name="Brooks K."/>
            <person name="Cherevach I."/>
            <person name="Chillingworth T."/>
            <person name="Woodward J."/>
            <person name="Norberczak H."/>
            <person name="Lord A."/>
            <person name="Arrowsmith C."/>
            <person name="Jagels K."/>
            <person name="Moule S."/>
            <person name="Mungall K."/>
            <person name="Saunders M."/>
            <person name="Whitehead S."/>
            <person name="Chabalgoity J.A."/>
            <person name="Maskell D."/>
            <person name="Humphreys T."/>
            <person name="Roberts M."/>
            <person name="Barrow P.A."/>
            <person name="Dougan G."/>
            <person name="Parkhill J."/>
        </authorList>
    </citation>
    <scope>NUCLEOTIDE SEQUENCE [LARGE SCALE GENOMIC DNA]</scope>
    <source>
        <strain>287/91 / NCTC 13346</strain>
    </source>
</reference>
<organism>
    <name type="scientific">Salmonella gallinarum (strain 287/91 / NCTC 13346)</name>
    <dbReference type="NCBI Taxonomy" id="550538"/>
    <lineage>
        <taxon>Bacteria</taxon>
        <taxon>Pseudomonadati</taxon>
        <taxon>Pseudomonadota</taxon>
        <taxon>Gammaproteobacteria</taxon>
        <taxon>Enterobacterales</taxon>
        <taxon>Enterobacteriaceae</taxon>
        <taxon>Salmonella</taxon>
    </lineage>
</organism>
<comment type="similarity">
    <text evidence="1">Belongs to the bacterial ribosomal protein bS16 family.</text>
</comment>
<proteinExistence type="inferred from homology"/>
<protein>
    <recommendedName>
        <fullName evidence="1">Small ribosomal subunit protein bS16</fullName>
    </recommendedName>
    <alternativeName>
        <fullName evidence="2">30S ribosomal protein S16</fullName>
    </alternativeName>
</protein>
<name>RS16_SALG2</name>